<sequence length="309" mass="32876">MSGERAKRFPLALEDLKRAPRKSDGRAGERHAAIAAPKAADKPAAVPKPVALKPGVARMPPGTAAAKPATALKPTVPKPAMPKPIAANAAPAGAFALTSERVRERMVERLRANGVTDPRVLDAMAAVPRHLFVDAGLATQAYEDSALPIGHQQTISKPSVVARMIELAMAGRTLERVLEIGTGCGYQAAVLSHVARDVYSIERIKPLYERAKLNLRPLRVPNIRLHYGDGRVGLPSAAPFDAIVIAAAGLDVPQALLEQLAIGGRLVAPVGAQSGQPQVLTLIERVAHAQWRESRLDRVFFVPLKSGVI</sequence>
<comment type="function">
    <text evidence="1">Catalyzes the methyl esterification of L-isoaspartyl residues in peptides and proteins that result from spontaneous decomposition of normal L-aspartyl and L-asparaginyl residues. It plays a role in the repair and/or degradation of damaged proteins.</text>
</comment>
<comment type="catalytic activity">
    <reaction evidence="1">
        <text>[protein]-L-isoaspartate + S-adenosyl-L-methionine = [protein]-L-isoaspartate alpha-methyl ester + S-adenosyl-L-homocysteine</text>
        <dbReference type="Rhea" id="RHEA:12705"/>
        <dbReference type="Rhea" id="RHEA-COMP:12143"/>
        <dbReference type="Rhea" id="RHEA-COMP:12144"/>
        <dbReference type="ChEBI" id="CHEBI:57856"/>
        <dbReference type="ChEBI" id="CHEBI:59789"/>
        <dbReference type="ChEBI" id="CHEBI:90596"/>
        <dbReference type="ChEBI" id="CHEBI:90598"/>
        <dbReference type="EC" id="2.1.1.77"/>
    </reaction>
</comment>
<comment type="subcellular location">
    <subcellularLocation>
        <location evidence="1">Cytoplasm</location>
    </subcellularLocation>
</comment>
<comment type="similarity">
    <text evidence="1">Belongs to the methyltransferase superfamily. L-isoaspartyl/D-aspartyl protein methyltransferase family.</text>
</comment>
<proteinExistence type="inferred from homology"/>
<evidence type="ECO:0000255" key="1">
    <source>
        <dbReference type="HAMAP-Rule" id="MF_00090"/>
    </source>
</evidence>
<evidence type="ECO:0000256" key="2">
    <source>
        <dbReference type="SAM" id="MobiDB-lite"/>
    </source>
</evidence>
<protein>
    <recommendedName>
        <fullName evidence="1">Protein-L-isoaspartate O-methyltransferase</fullName>
        <ecNumber evidence="1">2.1.1.77</ecNumber>
    </recommendedName>
    <alternativeName>
        <fullName evidence="1">L-isoaspartyl protein carboxyl methyltransferase</fullName>
    </alternativeName>
    <alternativeName>
        <fullName evidence="1">Protein L-isoaspartyl methyltransferase</fullName>
    </alternativeName>
    <alternativeName>
        <fullName evidence="1">Protein-beta-aspartate methyltransferase</fullName>
        <shortName evidence="1">PIMT</shortName>
    </alternativeName>
</protein>
<accession>A4JEQ0</accession>
<dbReference type="EC" id="2.1.1.77" evidence="1"/>
<dbReference type="EMBL" id="CP000614">
    <property type="protein sequence ID" value="ABO54753.1"/>
    <property type="molecule type" value="Genomic_DNA"/>
</dbReference>
<dbReference type="SMR" id="A4JEQ0"/>
<dbReference type="KEGG" id="bvi:Bcep1808_1749"/>
<dbReference type="eggNOG" id="COG2518">
    <property type="taxonomic scope" value="Bacteria"/>
</dbReference>
<dbReference type="HOGENOM" id="CLU_055432_1_0_4"/>
<dbReference type="Proteomes" id="UP000002287">
    <property type="component" value="Chromosome 1"/>
</dbReference>
<dbReference type="GO" id="GO:0005737">
    <property type="term" value="C:cytoplasm"/>
    <property type="evidence" value="ECO:0007669"/>
    <property type="project" value="UniProtKB-SubCell"/>
</dbReference>
<dbReference type="GO" id="GO:0004719">
    <property type="term" value="F:protein-L-isoaspartate (D-aspartate) O-methyltransferase activity"/>
    <property type="evidence" value="ECO:0007669"/>
    <property type="project" value="UniProtKB-UniRule"/>
</dbReference>
<dbReference type="GO" id="GO:0032259">
    <property type="term" value="P:methylation"/>
    <property type="evidence" value="ECO:0007669"/>
    <property type="project" value="UniProtKB-KW"/>
</dbReference>
<dbReference type="GO" id="GO:0036211">
    <property type="term" value="P:protein modification process"/>
    <property type="evidence" value="ECO:0007669"/>
    <property type="project" value="UniProtKB-UniRule"/>
</dbReference>
<dbReference type="GO" id="GO:0030091">
    <property type="term" value="P:protein repair"/>
    <property type="evidence" value="ECO:0007669"/>
    <property type="project" value="UniProtKB-UniRule"/>
</dbReference>
<dbReference type="CDD" id="cd02440">
    <property type="entry name" value="AdoMet_MTases"/>
    <property type="match status" value="1"/>
</dbReference>
<dbReference type="FunFam" id="3.40.50.150:FF:000010">
    <property type="entry name" value="Protein-L-isoaspartate O-methyltransferase"/>
    <property type="match status" value="1"/>
</dbReference>
<dbReference type="Gene3D" id="3.40.50.150">
    <property type="entry name" value="Vaccinia Virus protein VP39"/>
    <property type="match status" value="1"/>
</dbReference>
<dbReference type="HAMAP" id="MF_00090">
    <property type="entry name" value="PIMT"/>
    <property type="match status" value="1"/>
</dbReference>
<dbReference type="InterPro" id="IPR000682">
    <property type="entry name" value="PCMT"/>
</dbReference>
<dbReference type="InterPro" id="IPR029063">
    <property type="entry name" value="SAM-dependent_MTases_sf"/>
</dbReference>
<dbReference type="NCBIfam" id="TIGR00080">
    <property type="entry name" value="pimt"/>
    <property type="match status" value="1"/>
</dbReference>
<dbReference type="NCBIfam" id="NF001453">
    <property type="entry name" value="PRK00312.1"/>
    <property type="match status" value="1"/>
</dbReference>
<dbReference type="PANTHER" id="PTHR11579">
    <property type="entry name" value="PROTEIN-L-ISOASPARTATE O-METHYLTRANSFERASE"/>
    <property type="match status" value="1"/>
</dbReference>
<dbReference type="PANTHER" id="PTHR11579:SF0">
    <property type="entry name" value="PROTEIN-L-ISOASPARTATE(D-ASPARTATE) O-METHYLTRANSFERASE"/>
    <property type="match status" value="1"/>
</dbReference>
<dbReference type="Pfam" id="PF01135">
    <property type="entry name" value="PCMT"/>
    <property type="match status" value="1"/>
</dbReference>
<dbReference type="SUPFAM" id="SSF53335">
    <property type="entry name" value="S-adenosyl-L-methionine-dependent methyltransferases"/>
    <property type="match status" value="1"/>
</dbReference>
<dbReference type="PROSITE" id="PS01279">
    <property type="entry name" value="PCMT"/>
    <property type="match status" value="1"/>
</dbReference>
<keyword id="KW-0963">Cytoplasm</keyword>
<keyword id="KW-0489">Methyltransferase</keyword>
<keyword id="KW-0949">S-adenosyl-L-methionine</keyword>
<keyword id="KW-0808">Transferase</keyword>
<name>PIMT_BURVG</name>
<feature type="chain" id="PRO_0000351840" description="Protein-L-isoaspartate O-methyltransferase">
    <location>
        <begin position="1"/>
        <end position="309"/>
    </location>
</feature>
<feature type="region of interest" description="Disordered" evidence="2">
    <location>
        <begin position="1"/>
        <end position="46"/>
    </location>
</feature>
<feature type="compositionally biased region" description="Basic and acidic residues" evidence="2">
    <location>
        <begin position="14"/>
        <end position="32"/>
    </location>
</feature>
<feature type="compositionally biased region" description="Low complexity" evidence="2">
    <location>
        <begin position="33"/>
        <end position="46"/>
    </location>
</feature>
<feature type="active site" evidence="1">
    <location>
        <position position="156"/>
    </location>
</feature>
<reference key="1">
    <citation type="submission" date="2007-03" db="EMBL/GenBank/DDBJ databases">
        <title>Complete sequence of chromosome 1 of Burkholderia vietnamiensis G4.</title>
        <authorList>
            <consortium name="US DOE Joint Genome Institute"/>
            <person name="Copeland A."/>
            <person name="Lucas S."/>
            <person name="Lapidus A."/>
            <person name="Barry K."/>
            <person name="Detter J.C."/>
            <person name="Glavina del Rio T."/>
            <person name="Hammon N."/>
            <person name="Israni S."/>
            <person name="Dalin E."/>
            <person name="Tice H."/>
            <person name="Pitluck S."/>
            <person name="Chain P."/>
            <person name="Malfatti S."/>
            <person name="Shin M."/>
            <person name="Vergez L."/>
            <person name="Schmutz J."/>
            <person name="Larimer F."/>
            <person name="Land M."/>
            <person name="Hauser L."/>
            <person name="Kyrpides N."/>
            <person name="Tiedje J."/>
            <person name="Richardson P."/>
        </authorList>
    </citation>
    <scope>NUCLEOTIDE SEQUENCE [LARGE SCALE GENOMIC DNA]</scope>
    <source>
        <strain>G4 / LMG 22486</strain>
    </source>
</reference>
<gene>
    <name evidence="1" type="primary">pcm</name>
    <name type="ordered locus">Bcep1808_1749</name>
</gene>
<organism>
    <name type="scientific">Burkholderia vietnamiensis (strain G4 / LMG 22486)</name>
    <name type="common">Burkholderia cepacia (strain R1808)</name>
    <dbReference type="NCBI Taxonomy" id="269482"/>
    <lineage>
        <taxon>Bacteria</taxon>
        <taxon>Pseudomonadati</taxon>
        <taxon>Pseudomonadota</taxon>
        <taxon>Betaproteobacteria</taxon>
        <taxon>Burkholderiales</taxon>
        <taxon>Burkholderiaceae</taxon>
        <taxon>Burkholderia</taxon>
        <taxon>Burkholderia cepacia complex</taxon>
    </lineage>
</organism>